<evidence type="ECO:0000255" key="1">
    <source>
        <dbReference type="HAMAP-Rule" id="MF_01400"/>
    </source>
</evidence>
<evidence type="ECO:0000255" key="2">
    <source>
        <dbReference type="PROSITE-ProRule" id="PRU01126"/>
    </source>
</evidence>
<evidence type="ECO:0000305" key="3"/>
<name>MSRB_SALTY</name>
<protein>
    <recommendedName>
        <fullName evidence="1">Peptide methionine sulfoxide reductase MsrB</fullName>
        <ecNumber evidence="1">1.8.4.12</ecNumber>
    </recommendedName>
    <alternativeName>
        <fullName evidence="1">Peptide-methionine (R)-S-oxide reductase</fullName>
    </alternativeName>
</protein>
<sequence>MANQPSAEELKKKLSEMQFYVTQDRGTEPPFTGRLLHNKRDGVYHCLVCDTPLFHSHTKYDSGCGWPSFYQPVSEEAIRYIDDFSHGMQRVEIRCGNCDAHLGHVFPDGPQPTGERYCVNSASLAFSDEKNGDQLKG</sequence>
<proteinExistence type="inferred from homology"/>
<keyword id="KW-0479">Metal-binding</keyword>
<keyword id="KW-0560">Oxidoreductase</keyword>
<keyword id="KW-1185">Reference proteome</keyword>
<keyword id="KW-0862">Zinc</keyword>
<feature type="chain" id="PRO_0000140292" description="Peptide methionine sulfoxide reductase MsrB">
    <location>
        <begin position="1"/>
        <end position="137"/>
    </location>
</feature>
<feature type="domain" description="MsrB" evidence="2">
    <location>
        <begin position="7"/>
        <end position="129"/>
    </location>
</feature>
<feature type="active site" description="Nucleophile" evidence="2">
    <location>
        <position position="118"/>
    </location>
</feature>
<feature type="binding site" evidence="2">
    <location>
        <position position="46"/>
    </location>
    <ligand>
        <name>Zn(2+)</name>
        <dbReference type="ChEBI" id="CHEBI:29105"/>
    </ligand>
</feature>
<feature type="binding site" evidence="2">
    <location>
        <position position="49"/>
    </location>
    <ligand>
        <name>Zn(2+)</name>
        <dbReference type="ChEBI" id="CHEBI:29105"/>
    </ligand>
</feature>
<feature type="binding site" evidence="2">
    <location>
        <position position="95"/>
    </location>
    <ligand>
        <name>Zn(2+)</name>
        <dbReference type="ChEBI" id="CHEBI:29105"/>
    </ligand>
</feature>
<feature type="binding site" evidence="2">
    <location>
        <position position="98"/>
    </location>
    <ligand>
        <name>Zn(2+)</name>
        <dbReference type="ChEBI" id="CHEBI:29105"/>
    </ligand>
</feature>
<organism>
    <name type="scientific">Salmonella typhimurium (strain LT2 / SGSC1412 / ATCC 700720)</name>
    <dbReference type="NCBI Taxonomy" id="99287"/>
    <lineage>
        <taxon>Bacteria</taxon>
        <taxon>Pseudomonadati</taxon>
        <taxon>Pseudomonadota</taxon>
        <taxon>Gammaproteobacteria</taxon>
        <taxon>Enterobacterales</taxon>
        <taxon>Enterobacteriaceae</taxon>
        <taxon>Salmonella</taxon>
    </lineage>
</organism>
<gene>
    <name evidence="1" type="primary">msrB</name>
    <name type="ordered locus">STM1291</name>
</gene>
<comment type="catalytic activity">
    <reaction evidence="1">
        <text>L-methionyl-[protein] + [thioredoxin]-disulfide + H2O = L-methionyl-(R)-S-oxide-[protein] + [thioredoxin]-dithiol</text>
        <dbReference type="Rhea" id="RHEA:24164"/>
        <dbReference type="Rhea" id="RHEA-COMP:10698"/>
        <dbReference type="Rhea" id="RHEA-COMP:10700"/>
        <dbReference type="Rhea" id="RHEA-COMP:12313"/>
        <dbReference type="Rhea" id="RHEA-COMP:12314"/>
        <dbReference type="ChEBI" id="CHEBI:15377"/>
        <dbReference type="ChEBI" id="CHEBI:16044"/>
        <dbReference type="ChEBI" id="CHEBI:29950"/>
        <dbReference type="ChEBI" id="CHEBI:45764"/>
        <dbReference type="ChEBI" id="CHEBI:50058"/>
        <dbReference type="EC" id="1.8.4.12"/>
    </reaction>
</comment>
<comment type="cofactor">
    <cofactor evidence="1">
        <name>Zn(2+)</name>
        <dbReference type="ChEBI" id="CHEBI:29105"/>
    </cofactor>
    <text evidence="1">Binds 1 zinc ion per subunit. The zinc ion is important for the structural integrity of the protein.</text>
</comment>
<comment type="similarity">
    <text evidence="1">Belongs to the MsrB Met sulfoxide reductase family.</text>
</comment>
<comment type="sequence caution" evidence="3">
    <conflict type="erroneous initiation">
        <sequence resource="EMBL-CDS" id="AAL20216"/>
    </conflict>
</comment>
<dbReference type="EC" id="1.8.4.12" evidence="1"/>
<dbReference type="EMBL" id="AE006468">
    <property type="protein sequence ID" value="AAL20216.1"/>
    <property type="status" value="ALT_INIT"/>
    <property type="molecule type" value="Genomic_DNA"/>
</dbReference>
<dbReference type="SMR" id="P65449"/>
<dbReference type="STRING" id="99287.STM1291"/>
<dbReference type="PaxDb" id="99287-STM1291"/>
<dbReference type="KEGG" id="stm:STM1291"/>
<dbReference type="PATRIC" id="fig|99287.12.peg.1372"/>
<dbReference type="HOGENOM" id="CLU_031040_8_5_6"/>
<dbReference type="PhylomeDB" id="P65449"/>
<dbReference type="Proteomes" id="UP000001014">
    <property type="component" value="Chromosome"/>
</dbReference>
<dbReference type="GO" id="GO:0005737">
    <property type="term" value="C:cytoplasm"/>
    <property type="evidence" value="ECO:0000318"/>
    <property type="project" value="GO_Central"/>
</dbReference>
<dbReference type="GO" id="GO:0033743">
    <property type="term" value="F:peptide-methionine (R)-S-oxide reductase activity"/>
    <property type="evidence" value="ECO:0000318"/>
    <property type="project" value="GO_Central"/>
</dbReference>
<dbReference type="GO" id="GO:0008270">
    <property type="term" value="F:zinc ion binding"/>
    <property type="evidence" value="ECO:0007669"/>
    <property type="project" value="UniProtKB-UniRule"/>
</dbReference>
<dbReference type="GO" id="GO:0030091">
    <property type="term" value="P:protein repair"/>
    <property type="evidence" value="ECO:0007669"/>
    <property type="project" value="InterPro"/>
</dbReference>
<dbReference type="GO" id="GO:0006979">
    <property type="term" value="P:response to oxidative stress"/>
    <property type="evidence" value="ECO:0007669"/>
    <property type="project" value="InterPro"/>
</dbReference>
<dbReference type="FunFam" id="2.170.150.20:FF:000001">
    <property type="entry name" value="Peptide methionine sulfoxide reductase MsrB"/>
    <property type="match status" value="1"/>
</dbReference>
<dbReference type="Gene3D" id="2.170.150.20">
    <property type="entry name" value="Peptide methionine sulfoxide reductase"/>
    <property type="match status" value="1"/>
</dbReference>
<dbReference type="HAMAP" id="MF_01400">
    <property type="entry name" value="MsrB"/>
    <property type="match status" value="1"/>
</dbReference>
<dbReference type="InterPro" id="IPR028427">
    <property type="entry name" value="Met_Sox_Rdtase_MsrB"/>
</dbReference>
<dbReference type="InterPro" id="IPR002579">
    <property type="entry name" value="Met_Sox_Rdtase_MsrB_dom"/>
</dbReference>
<dbReference type="InterPro" id="IPR011057">
    <property type="entry name" value="Mss4-like_sf"/>
</dbReference>
<dbReference type="NCBIfam" id="TIGR00357">
    <property type="entry name" value="peptide-methionine (R)-S-oxide reductase MsrB"/>
    <property type="match status" value="1"/>
</dbReference>
<dbReference type="PANTHER" id="PTHR10173">
    <property type="entry name" value="METHIONINE SULFOXIDE REDUCTASE"/>
    <property type="match status" value="1"/>
</dbReference>
<dbReference type="PANTHER" id="PTHR10173:SF52">
    <property type="entry name" value="METHIONINE-R-SULFOXIDE REDUCTASE B1"/>
    <property type="match status" value="1"/>
</dbReference>
<dbReference type="Pfam" id="PF01641">
    <property type="entry name" value="SelR"/>
    <property type="match status" value="1"/>
</dbReference>
<dbReference type="SUPFAM" id="SSF51316">
    <property type="entry name" value="Mss4-like"/>
    <property type="match status" value="1"/>
</dbReference>
<dbReference type="PROSITE" id="PS51790">
    <property type="entry name" value="MSRB"/>
    <property type="match status" value="1"/>
</dbReference>
<accession>P65449</accession>
<accession>Q8XGD3</accession>
<reference key="1">
    <citation type="journal article" date="2001" name="Nature">
        <title>Complete genome sequence of Salmonella enterica serovar Typhimurium LT2.</title>
        <authorList>
            <person name="McClelland M."/>
            <person name="Sanderson K.E."/>
            <person name="Spieth J."/>
            <person name="Clifton S.W."/>
            <person name="Latreille P."/>
            <person name="Courtney L."/>
            <person name="Porwollik S."/>
            <person name="Ali J."/>
            <person name="Dante M."/>
            <person name="Du F."/>
            <person name="Hou S."/>
            <person name="Layman D."/>
            <person name="Leonard S."/>
            <person name="Nguyen C."/>
            <person name="Scott K."/>
            <person name="Holmes A."/>
            <person name="Grewal N."/>
            <person name="Mulvaney E."/>
            <person name="Ryan E."/>
            <person name="Sun H."/>
            <person name="Florea L."/>
            <person name="Miller W."/>
            <person name="Stoneking T."/>
            <person name="Nhan M."/>
            <person name="Waterston R."/>
            <person name="Wilson R.K."/>
        </authorList>
    </citation>
    <scope>NUCLEOTIDE SEQUENCE [LARGE SCALE GENOMIC DNA]</scope>
    <source>
        <strain>LT2 / SGSC1412 / ATCC 700720</strain>
    </source>
</reference>